<evidence type="ECO:0000255" key="1">
    <source>
        <dbReference type="HAMAP-Rule" id="MF_01077"/>
    </source>
</evidence>
<protein>
    <recommendedName>
        <fullName evidence="1">Ribosome maturation factor RimP</fullName>
    </recommendedName>
</protein>
<comment type="function">
    <text evidence="1">Required for maturation of 30S ribosomal subunits.</text>
</comment>
<comment type="subcellular location">
    <subcellularLocation>
        <location evidence="1">Cytoplasm</location>
    </subcellularLocation>
</comment>
<comment type="similarity">
    <text evidence="1">Belongs to the RimP family.</text>
</comment>
<sequence length="163" mass="18139">MCKEVIMSQKIIDLVTAVVAPAIPDPYELVDIEYEKIGSDYILSVLIDKPGGITVEDTADLTEIISPLLDTIQPDPFPDQYMLEVSSPGLERPLKTKEALKNAVGQYINVSLYKAIDKIKIFQGDLLAFDGETLTIDYLDKTRHKTVEIPYQTVAKARLAVKL</sequence>
<proteinExistence type="inferred from homology"/>
<keyword id="KW-0963">Cytoplasm</keyword>
<keyword id="KW-1185">Reference proteome</keyword>
<keyword id="KW-0690">Ribosome biogenesis</keyword>
<organism>
    <name type="scientific">Streptococcus thermophilus (strain ATCC BAA-250 / LMG 18311)</name>
    <dbReference type="NCBI Taxonomy" id="264199"/>
    <lineage>
        <taxon>Bacteria</taxon>
        <taxon>Bacillati</taxon>
        <taxon>Bacillota</taxon>
        <taxon>Bacilli</taxon>
        <taxon>Lactobacillales</taxon>
        <taxon>Streptococcaceae</taxon>
        <taxon>Streptococcus</taxon>
    </lineage>
</organism>
<feature type="chain" id="PRO_0000229283" description="Ribosome maturation factor RimP">
    <location>
        <begin position="1"/>
        <end position="163"/>
    </location>
</feature>
<reference key="1">
    <citation type="journal article" date="2004" name="Nat. Biotechnol.">
        <title>Complete sequence and comparative genome analysis of the dairy bacterium Streptococcus thermophilus.</title>
        <authorList>
            <person name="Bolotin A."/>
            <person name="Quinquis B."/>
            <person name="Renault P."/>
            <person name="Sorokin A."/>
            <person name="Ehrlich S.D."/>
            <person name="Kulakauskas S."/>
            <person name="Lapidus A."/>
            <person name="Goltsman E."/>
            <person name="Mazur M."/>
            <person name="Pusch G.D."/>
            <person name="Fonstein M."/>
            <person name="Overbeek R."/>
            <person name="Kyprides N."/>
            <person name="Purnelle B."/>
            <person name="Prozzi D."/>
            <person name="Ngui K."/>
            <person name="Masuy D."/>
            <person name="Hancy F."/>
            <person name="Burteau S."/>
            <person name="Boutry M."/>
            <person name="Delcour J."/>
            <person name="Goffeau A."/>
            <person name="Hols P."/>
        </authorList>
    </citation>
    <scope>NUCLEOTIDE SEQUENCE [LARGE SCALE GENOMIC DNA]</scope>
    <source>
        <strain>ATCC BAA-250 / LMG 18311</strain>
    </source>
</reference>
<name>RIMP_STRT2</name>
<accession>Q5M5V9</accession>
<gene>
    <name evidence="1" type="primary">rimP</name>
    <name type="ordered locus">stu0340</name>
</gene>
<dbReference type="EMBL" id="CP000023">
    <property type="protein sequence ID" value="AAV60060.1"/>
    <property type="molecule type" value="Genomic_DNA"/>
</dbReference>
<dbReference type="SMR" id="Q5M5V9"/>
<dbReference type="STRING" id="264199.stu0340"/>
<dbReference type="KEGG" id="stl:stu0340"/>
<dbReference type="eggNOG" id="COG0779">
    <property type="taxonomic scope" value="Bacteria"/>
</dbReference>
<dbReference type="HOGENOM" id="CLU_070525_2_0_9"/>
<dbReference type="Proteomes" id="UP000001170">
    <property type="component" value="Chromosome"/>
</dbReference>
<dbReference type="GO" id="GO:0005829">
    <property type="term" value="C:cytosol"/>
    <property type="evidence" value="ECO:0007669"/>
    <property type="project" value="TreeGrafter"/>
</dbReference>
<dbReference type="GO" id="GO:0000028">
    <property type="term" value="P:ribosomal small subunit assembly"/>
    <property type="evidence" value="ECO:0007669"/>
    <property type="project" value="TreeGrafter"/>
</dbReference>
<dbReference type="GO" id="GO:0006412">
    <property type="term" value="P:translation"/>
    <property type="evidence" value="ECO:0007669"/>
    <property type="project" value="TreeGrafter"/>
</dbReference>
<dbReference type="CDD" id="cd01734">
    <property type="entry name" value="YlxS_C"/>
    <property type="match status" value="1"/>
</dbReference>
<dbReference type="Gene3D" id="2.30.30.180">
    <property type="entry name" value="Ribosome maturation factor RimP, C-terminal domain"/>
    <property type="match status" value="1"/>
</dbReference>
<dbReference type="Gene3D" id="3.30.300.70">
    <property type="entry name" value="RimP-like superfamily, N-terminal"/>
    <property type="match status" value="1"/>
</dbReference>
<dbReference type="HAMAP" id="MF_01077">
    <property type="entry name" value="RimP"/>
    <property type="match status" value="1"/>
</dbReference>
<dbReference type="InterPro" id="IPR003728">
    <property type="entry name" value="Ribosome_maturation_RimP"/>
</dbReference>
<dbReference type="InterPro" id="IPR028998">
    <property type="entry name" value="RimP_C"/>
</dbReference>
<dbReference type="InterPro" id="IPR036847">
    <property type="entry name" value="RimP_C_sf"/>
</dbReference>
<dbReference type="InterPro" id="IPR028989">
    <property type="entry name" value="RimP_N"/>
</dbReference>
<dbReference type="InterPro" id="IPR035956">
    <property type="entry name" value="RimP_N_sf"/>
</dbReference>
<dbReference type="NCBIfam" id="NF000928">
    <property type="entry name" value="PRK00092.1-2"/>
    <property type="match status" value="1"/>
</dbReference>
<dbReference type="PANTHER" id="PTHR33867">
    <property type="entry name" value="RIBOSOME MATURATION FACTOR RIMP"/>
    <property type="match status" value="1"/>
</dbReference>
<dbReference type="PANTHER" id="PTHR33867:SF1">
    <property type="entry name" value="RIBOSOME MATURATION FACTOR RIMP"/>
    <property type="match status" value="1"/>
</dbReference>
<dbReference type="Pfam" id="PF17384">
    <property type="entry name" value="DUF150_C"/>
    <property type="match status" value="1"/>
</dbReference>
<dbReference type="Pfam" id="PF02576">
    <property type="entry name" value="RimP_N"/>
    <property type="match status" value="1"/>
</dbReference>
<dbReference type="SUPFAM" id="SSF74942">
    <property type="entry name" value="YhbC-like, C-terminal domain"/>
    <property type="match status" value="1"/>
</dbReference>
<dbReference type="SUPFAM" id="SSF75420">
    <property type="entry name" value="YhbC-like, N-terminal domain"/>
    <property type="match status" value="1"/>
</dbReference>